<sequence length="382" mass="42489">MTLQAAGIVTEYNPFHNGHAYQIAQARQKTGADVIVAAMSGNWVQRGEPAIMDKWQRTEAALAGGVDLVVELSGAAALQPAHLFAQGAIAVLATLKCQWLVFGTEHPDMDYDCLMAHLPSDPAIFKRFDQTYASLFQGYLREQTGITLSAANDILGFFYAVANQQQGQPLQLVPLARRGSQHNDTAVMQGTNYASATAIRAASLAGDWATVQPVVPAKTLALLQQESLISWADFWPLLRYQLISAPVTDMRQRYQITEGVEYRLKRAALEATTFADFMRIVKTKRYTYTRLQRQAAYLLLQALPEEMRPQPQYLRVLGYSKQGQAYLHQIKKHVALPLVSRANRDWQKGVGSLDDRLGALRTLVTGIPQDYGRIPIKKPDSE</sequence>
<organism>
    <name type="scientific">Levilactobacillus brevis (strain ATCC 367 / BCRC 12310 / CIP 105137 / JCM 1170 / LMG 11437 / NCIMB 947 / NCTC 947)</name>
    <name type="common">Lactobacillus brevis</name>
    <dbReference type="NCBI Taxonomy" id="387344"/>
    <lineage>
        <taxon>Bacteria</taxon>
        <taxon>Bacillati</taxon>
        <taxon>Bacillota</taxon>
        <taxon>Bacilli</taxon>
        <taxon>Lactobacillales</taxon>
        <taxon>Lactobacillaceae</taxon>
        <taxon>Levilactobacillus</taxon>
    </lineage>
</organism>
<dbReference type="EC" id="6.3.4.-" evidence="1"/>
<dbReference type="EMBL" id="CP000416">
    <property type="protein sequence ID" value="ABJ64158.1"/>
    <property type="molecule type" value="Genomic_DNA"/>
</dbReference>
<dbReference type="RefSeq" id="WP_011667788.1">
    <property type="nucleotide sequence ID" value="NC_008497.1"/>
</dbReference>
<dbReference type="SMR" id="Q03RL4"/>
<dbReference type="STRING" id="387344.LVIS_1025"/>
<dbReference type="KEGG" id="lbr:LVIS_1025"/>
<dbReference type="eggNOG" id="COG1323">
    <property type="taxonomic scope" value="Bacteria"/>
</dbReference>
<dbReference type="HOGENOM" id="CLU_038915_0_2_9"/>
<dbReference type="Proteomes" id="UP000001652">
    <property type="component" value="Chromosome"/>
</dbReference>
<dbReference type="GO" id="GO:0005737">
    <property type="term" value="C:cytoplasm"/>
    <property type="evidence" value="ECO:0007669"/>
    <property type="project" value="UniProtKB-SubCell"/>
</dbReference>
<dbReference type="GO" id="GO:0005524">
    <property type="term" value="F:ATP binding"/>
    <property type="evidence" value="ECO:0007669"/>
    <property type="project" value="UniProtKB-KW"/>
</dbReference>
<dbReference type="GO" id="GO:0016879">
    <property type="term" value="F:ligase activity, forming carbon-nitrogen bonds"/>
    <property type="evidence" value="ECO:0007669"/>
    <property type="project" value="UniProtKB-UniRule"/>
</dbReference>
<dbReference type="GO" id="GO:0000049">
    <property type="term" value="F:tRNA binding"/>
    <property type="evidence" value="ECO:0007669"/>
    <property type="project" value="UniProtKB-KW"/>
</dbReference>
<dbReference type="GO" id="GO:0006400">
    <property type="term" value="P:tRNA modification"/>
    <property type="evidence" value="ECO:0007669"/>
    <property type="project" value="UniProtKB-UniRule"/>
</dbReference>
<dbReference type="Gene3D" id="3.40.50.620">
    <property type="entry name" value="HUPs"/>
    <property type="match status" value="1"/>
</dbReference>
<dbReference type="HAMAP" id="MF_01539">
    <property type="entry name" value="TmcAL"/>
    <property type="match status" value="1"/>
</dbReference>
<dbReference type="InterPro" id="IPR014729">
    <property type="entry name" value="Rossmann-like_a/b/a_fold"/>
</dbReference>
<dbReference type="InterPro" id="IPR008513">
    <property type="entry name" value="tRNA(Met)_cyd_acetate_ligase"/>
</dbReference>
<dbReference type="NCBIfam" id="NF010191">
    <property type="entry name" value="PRK13670.1"/>
    <property type="match status" value="1"/>
</dbReference>
<dbReference type="PANTHER" id="PTHR37825">
    <property type="entry name" value="TRNA(MET) CYTIDINE ACETATE LIGASE"/>
    <property type="match status" value="1"/>
</dbReference>
<dbReference type="PANTHER" id="PTHR37825:SF1">
    <property type="entry name" value="TRNA(MET) CYTIDINE ACETATE LIGASE"/>
    <property type="match status" value="1"/>
</dbReference>
<dbReference type="Pfam" id="PF05636">
    <property type="entry name" value="HIGH_NTase1"/>
    <property type="match status" value="1"/>
</dbReference>
<dbReference type="SUPFAM" id="SSF52374">
    <property type="entry name" value="Nucleotidylyl transferase"/>
    <property type="match status" value="1"/>
</dbReference>
<protein>
    <recommendedName>
        <fullName evidence="1">tRNA(Met) cytidine acetate ligase</fullName>
        <ecNumber evidence="1">6.3.4.-</ecNumber>
    </recommendedName>
</protein>
<evidence type="ECO:0000255" key="1">
    <source>
        <dbReference type="HAMAP-Rule" id="MF_01539"/>
    </source>
</evidence>
<name>TMCAL_LEVBA</name>
<keyword id="KW-0067">ATP-binding</keyword>
<keyword id="KW-0963">Cytoplasm</keyword>
<keyword id="KW-0436">Ligase</keyword>
<keyword id="KW-0547">Nucleotide-binding</keyword>
<keyword id="KW-1185">Reference proteome</keyword>
<keyword id="KW-0694">RNA-binding</keyword>
<keyword id="KW-0819">tRNA processing</keyword>
<keyword id="KW-0820">tRNA-binding</keyword>
<reference key="1">
    <citation type="journal article" date="2006" name="Proc. Natl. Acad. Sci. U.S.A.">
        <title>Comparative genomics of the lactic acid bacteria.</title>
        <authorList>
            <person name="Makarova K.S."/>
            <person name="Slesarev A."/>
            <person name="Wolf Y.I."/>
            <person name="Sorokin A."/>
            <person name="Mirkin B."/>
            <person name="Koonin E.V."/>
            <person name="Pavlov A."/>
            <person name="Pavlova N."/>
            <person name="Karamychev V."/>
            <person name="Polouchine N."/>
            <person name="Shakhova V."/>
            <person name="Grigoriev I."/>
            <person name="Lou Y."/>
            <person name="Rohksar D."/>
            <person name="Lucas S."/>
            <person name="Huang K."/>
            <person name="Goodstein D.M."/>
            <person name="Hawkins T."/>
            <person name="Plengvidhya V."/>
            <person name="Welker D."/>
            <person name="Hughes J."/>
            <person name="Goh Y."/>
            <person name="Benson A."/>
            <person name="Baldwin K."/>
            <person name="Lee J.-H."/>
            <person name="Diaz-Muniz I."/>
            <person name="Dosti B."/>
            <person name="Smeianov V."/>
            <person name="Wechter W."/>
            <person name="Barabote R."/>
            <person name="Lorca G."/>
            <person name="Altermann E."/>
            <person name="Barrangou R."/>
            <person name="Ganesan B."/>
            <person name="Xie Y."/>
            <person name="Rawsthorne H."/>
            <person name="Tamir D."/>
            <person name="Parker C."/>
            <person name="Breidt F."/>
            <person name="Broadbent J.R."/>
            <person name="Hutkins R."/>
            <person name="O'Sullivan D."/>
            <person name="Steele J."/>
            <person name="Unlu G."/>
            <person name="Saier M.H. Jr."/>
            <person name="Klaenhammer T."/>
            <person name="Richardson P."/>
            <person name="Kozyavkin S."/>
            <person name="Weimer B.C."/>
            <person name="Mills D.A."/>
        </authorList>
    </citation>
    <scope>NUCLEOTIDE SEQUENCE [LARGE SCALE GENOMIC DNA]</scope>
    <source>
        <strain>ATCC 367 / BCRC 12310 / CIP 105137 / JCM 1170 / LMG 11437 / NCIMB 947 / NCTC 947</strain>
    </source>
</reference>
<proteinExistence type="inferred from homology"/>
<comment type="function">
    <text evidence="1">Catalyzes the formation of N(4)-acetylcytidine (ac(4)C) at the wobble position of elongator tRNA(Met), using acetate and ATP as substrates. First activates an acetate ion to form acetyladenylate (Ac-AMP) and then transfers the acetyl group to tRNA to form ac(4)C34.</text>
</comment>
<comment type="catalytic activity">
    <reaction evidence="1">
        <text>cytidine(34) in elongator tRNA(Met) + acetate + ATP = N(4)-acetylcytidine(34) in elongator tRNA(Met) + AMP + diphosphate</text>
        <dbReference type="Rhea" id="RHEA:58144"/>
        <dbReference type="Rhea" id="RHEA-COMP:10693"/>
        <dbReference type="Rhea" id="RHEA-COMP:10694"/>
        <dbReference type="ChEBI" id="CHEBI:30089"/>
        <dbReference type="ChEBI" id="CHEBI:30616"/>
        <dbReference type="ChEBI" id="CHEBI:33019"/>
        <dbReference type="ChEBI" id="CHEBI:74900"/>
        <dbReference type="ChEBI" id="CHEBI:82748"/>
        <dbReference type="ChEBI" id="CHEBI:456215"/>
    </reaction>
</comment>
<comment type="subcellular location">
    <subcellularLocation>
        <location evidence="1">Cytoplasm</location>
    </subcellularLocation>
</comment>
<comment type="similarity">
    <text evidence="1">Belongs to the TmcAL family.</text>
</comment>
<gene>
    <name evidence="1" type="primary">tmcAL</name>
    <name type="ordered locus">LVIS_1025</name>
</gene>
<feature type="chain" id="PRO_0000292800" description="tRNA(Met) cytidine acetate ligase">
    <location>
        <begin position="1"/>
        <end position="382"/>
    </location>
</feature>
<feature type="binding site" evidence="1">
    <location>
        <begin position="9"/>
        <end position="22"/>
    </location>
    <ligand>
        <name>ATP</name>
        <dbReference type="ChEBI" id="CHEBI:30616"/>
    </ligand>
</feature>
<feature type="binding site" evidence="1">
    <location>
        <position position="103"/>
    </location>
    <ligand>
        <name>ATP</name>
        <dbReference type="ChEBI" id="CHEBI:30616"/>
    </ligand>
</feature>
<feature type="binding site" evidence="1">
    <location>
        <position position="152"/>
    </location>
    <ligand>
        <name>ATP</name>
        <dbReference type="ChEBI" id="CHEBI:30616"/>
    </ligand>
</feature>
<feature type="binding site" evidence="1">
    <location>
        <position position="177"/>
    </location>
    <ligand>
        <name>ATP</name>
        <dbReference type="ChEBI" id="CHEBI:30616"/>
    </ligand>
</feature>
<accession>Q03RL4</accession>